<dbReference type="EMBL" id="AY367055">
    <property type="protein sequence ID" value="AAQ72373.1"/>
    <property type="molecule type" value="mRNA"/>
</dbReference>
<dbReference type="EMBL" id="AB023140">
    <property type="protein sequence ID" value="BAA76767.2"/>
    <property type="status" value="ALT_INIT"/>
    <property type="molecule type" value="mRNA"/>
</dbReference>
<dbReference type="EMBL" id="AK292475">
    <property type="protein sequence ID" value="BAF85164.1"/>
    <property type="molecule type" value="mRNA"/>
</dbReference>
<dbReference type="EMBL" id="AK294057">
    <property type="protein sequence ID" value="BAG57404.1"/>
    <property type="molecule type" value="mRNA"/>
</dbReference>
<dbReference type="EMBL" id="AL133046">
    <property type="protein sequence ID" value="CAB61373.1"/>
    <property type="molecule type" value="mRNA"/>
</dbReference>
<dbReference type="EMBL" id="AC114482">
    <property type="status" value="NOT_ANNOTATED_CDS"/>
    <property type="molecule type" value="Genomic_DNA"/>
</dbReference>
<dbReference type="EMBL" id="CH471097">
    <property type="protein sequence ID" value="EAW73224.1"/>
    <property type="molecule type" value="Genomic_DNA"/>
</dbReference>
<dbReference type="EMBL" id="CH471097">
    <property type="protein sequence ID" value="EAW73226.1"/>
    <property type="molecule type" value="Genomic_DNA"/>
</dbReference>
<dbReference type="EMBL" id="CH471097">
    <property type="protein sequence ID" value="EAW73227.1"/>
    <property type="molecule type" value="Genomic_DNA"/>
</dbReference>
<dbReference type="EMBL" id="CH471097">
    <property type="protein sequence ID" value="EAW73228.1"/>
    <property type="molecule type" value="Genomic_DNA"/>
</dbReference>
<dbReference type="EMBL" id="BC033637">
    <property type="protein sequence ID" value="AAH33637.1"/>
    <property type="molecule type" value="mRNA"/>
</dbReference>
<dbReference type="EMBL" id="BC064389">
    <property type="protein sequence ID" value="AAH64389.1"/>
    <property type="molecule type" value="mRNA"/>
</dbReference>
<dbReference type="CCDS" id="CCDS53337.1">
    <molecule id="Q9Y2D8-3"/>
</dbReference>
<dbReference type="CCDS" id="CCDS699.1">
    <molecule id="Q9Y2D8-1"/>
</dbReference>
<dbReference type="PIR" id="T42649">
    <property type="entry name" value="T42649"/>
</dbReference>
<dbReference type="RefSeq" id="NP_001159765.1">
    <molecule id="Q9Y2D8-1"/>
    <property type="nucleotide sequence ID" value="NM_001166293.2"/>
</dbReference>
<dbReference type="RefSeq" id="NP_001159766.1">
    <molecule id="Q9Y2D8-3"/>
    <property type="nucleotide sequence ID" value="NM_001166294.2"/>
</dbReference>
<dbReference type="RefSeq" id="NP_001159767.1">
    <molecule id="Q9Y2D8-3"/>
    <property type="nucleotide sequence ID" value="NM_001166295.2"/>
</dbReference>
<dbReference type="RefSeq" id="NP_001159889.1">
    <molecule id="Q9Y2D8-1"/>
    <property type="nucleotide sequence ID" value="NM_001166417.2"/>
</dbReference>
<dbReference type="RefSeq" id="NP_054740.3">
    <molecule id="Q9Y2D8-1"/>
    <property type="nucleotide sequence ID" value="NM_014021.3"/>
</dbReference>
<dbReference type="RefSeq" id="XP_005270484.1">
    <molecule id="Q9Y2D8-1"/>
    <property type="nucleotide sequence ID" value="XM_005270427.3"/>
</dbReference>
<dbReference type="RefSeq" id="XP_005270485.1">
    <molecule id="Q9Y2D8-1"/>
    <property type="nucleotide sequence ID" value="XM_005270428.3"/>
</dbReference>
<dbReference type="RefSeq" id="XP_006710394.1">
    <molecule id="Q9Y2D8-3"/>
    <property type="nucleotide sequence ID" value="XM_006710331.3"/>
</dbReference>
<dbReference type="RefSeq" id="XP_011538912.1">
    <property type="nucleotide sequence ID" value="XM_011540610.1"/>
</dbReference>
<dbReference type="RefSeq" id="XP_016855723.1">
    <molecule id="Q9Y2D8-1"/>
    <property type="nucleotide sequence ID" value="XM_017000234.3"/>
</dbReference>
<dbReference type="RefSeq" id="XP_047300153.1">
    <molecule id="Q9Y2D8-1"/>
    <property type="nucleotide sequence ID" value="XM_047444197.1"/>
</dbReference>
<dbReference type="RefSeq" id="XP_047300158.1">
    <molecule id="Q9Y2D8-1"/>
    <property type="nucleotide sequence ID" value="XM_047444202.1"/>
</dbReference>
<dbReference type="RefSeq" id="XP_047300164.1">
    <molecule id="Q9Y2D8-1"/>
    <property type="nucleotide sequence ID" value="XM_047444208.1"/>
</dbReference>
<dbReference type="RefSeq" id="XP_047300172.1">
    <molecule id="Q9Y2D8-1"/>
    <property type="nucleotide sequence ID" value="XM_047444216.1"/>
</dbReference>
<dbReference type="RefSeq" id="XP_047300204.1">
    <molecule id="Q9Y2D8-3"/>
    <property type="nucleotide sequence ID" value="XM_047444248.1"/>
</dbReference>
<dbReference type="RefSeq" id="XP_054190155.1">
    <molecule id="Q9Y2D8-1"/>
    <property type="nucleotide sequence ID" value="XM_054334180.1"/>
</dbReference>
<dbReference type="RefSeq" id="XP_054190156.1">
    <molecule id="Q9Y2D8-1"/>
    <property type="nucleotide sequence ID" value="XM_054334181.1"/>
</dbReference>
<dbReference type="RefSeq" id="XP_054190157.1">
    <molecule id="Q9Y2D8-1"/>
    <property type="nucleotide sequence ID" value="XM_054334182.1"/>
</dbReference>
<dbReference type="RefSeq" id="XP_054190158.1">
    <molecule id="Q9Y2D8-1"/>
    <property type="nucleotide sequence ID" value="XM_054334183.1"/>
</dbReference>
<dbReference type="RefSeq" id="XP_054190159.1">
    <molecule id="Q9Y2D8-1"/>
    <property type="nucleotide sequence ID" value="XM_054334184.1"/>
</dbReference>
<dbReference type="RefSeq" id="XP_054190160.1">
    <molecule id="Q9Y2D8-1"/>
    <property type="nucleotide sequence ID" value="XM_054334185.1"/>
</dbReference>
<dbReference type="RefSeq" id="XP_054190161.1">
    <molecule id="Q9Y2D8-1"/>
    <property type="nucleotide sequence ID" value="XM_054334186.1"/>
</dbReference>
<dbReference type="RefSeq" id="XP_054190169.1">
    <molecule id="Q9Y2D8-3"/>
    <property type="nucleotide sequence ID" value="XM_054334194.1"/>
</dbReference>
<dbReference type="RefSeq" id="XP_054190170.1">
    <molecule id="Q9Y2D8-3"/>
    <property type="nucleotide sequence ID" value="XM_054334195.1"/>
</dbReference>
<dbReference type="SMR" id="Q9Y2D8"/>
<dbReference type="BioGRID" id="125567">
    <property type="interactions" value="317"/>
</dbReference>
<dbReference type="FunCoup" id="Q9Y2D8">
    <property type="interactions" value="1085"/>
</dbReference>
<dbReference type="IntAct" id="Q9Y2D8">
    <property type="interactions" value="334"/>
</dbReference>
<dbReference type="MINT" id="Q9Y2D8"/>
<dbReference type="STRING" id="9606.ENSP00000340279"/>
<dbReference type="MoonDB" id="Q9Y2D8">
    <property type="type" value="Predicted"/>
</dbReference>
<dbReference type="GlyGen" id="Q9Y2D8">
    <property type="glycosylation" value="1 site, 1 O-linked glycan (1 site)"/>
</dbReference>
<dbReference type="iPTMnet" id="Q9Y2D8"/>
<dbReference type="PhosphoSitePlus" id="Q9Y2D8"/>
<dbReference type="BioMuta" id="SSX2IP"/>
<dbReference type="DMDM" id="54035738"/>
<dbReference type="jPOST" id="Q9Y2D8"/>
<dbReference type="MassIVE" id="Q9Y2D8"/>
<dbReference type="PaxDb" id="9606-ENSP00000340279"/>
<dbReference type="PeptideAtlas" id="Q9Y2D8"/>
<dbReference type="ProteomicsDB" id="85743">
    <molecule id="Q9Y2D8-1"/>
</dbReference>
<dbReference type="ProteomicsDB" id="85744">
    <molecule id="Q9Y2D8-2"/>
</dbReference>
<dbReference type="Pumba" id="Q9Y2D8"/>
<dbReference type="Antibodypedia" id="19778">
    <property type="antibodies" value="236 antibodies from 29 providers"/>
</dbReference>
<dbReference type="DNASU" id="117178"/>
<dbReference type="Ensembl" id="ENST00000342203.8">
    <molecule id="Q9Y2D8-1"/>
    <property type="protein sequence ID" value="ENSP00000340279.3"/>
    <property type="gene ID" value="ENSG00000117155.17"/>
</dbReference>
<dbReference type="Ensembl" id="ENST00000437941.6">
    <molecule id="Q9Y2D8-3"/>
    <property type="protein sequence ID" value="ENSP00000412781.2"/>
    <property type="gene ID" value="ENSG00000117155.17"/>
</dbReference>
<dbReference type="Ensembl" id="ENST00000481102.5">
    <molecule id="Q9Y2D8-2"/>
    <property type="protein sequence ID" value="ENSP00000432261.1"/>
    <property type="gene ID" value="ENSG00000117155.17"/>
</dbReference>
<dbReference type="Ensembl" id="ENST00000605755.5">
    <molecule id="Q9Y2D8-3"/>
    <property type="protein sequence ID" value="ENSP00000474480.1"/>
    <property type="gene ID" value="ENSG00000117155.17"/>
</dbReference>
<dbReference type="GeneID" id="117178"/>
<dbReference type="KEGG" id="hsa:117178"/>
<dbReference type="MANE-Select" id="ENST00000342203.8">
    <property type="protein sequence ID" value="ENSP00000340279.3"/>
    <property type="RefSeq nucleotide sequence ID" value="NM_001166293.2"/>
    <property type="RefSeq protein sequence ID" value="NP_001159765.1"/>
</dbReference>
<dbReference type="UCSC" id="uc001dkj.4">
    <molecule id="Q9Y2D8-1"/>
    <property type="organism name" value="human"/>
</dbReference>
<dbReference type="AGR" id="HGNC:16509"/>
<dbReference type="CTD" id="117178"/>
<dbReference type="DisGeNET" id="117178"/>
<dbReference type="GeneCards" id="SSX2IP"/>
<dbReference type="HGNC" id="HGNC:16509">
    <property type="gene designation" value="SSX2IP"/>
</dbReference>
<dbReference type="HPA" id="ENSG00000117155">
    <property type="expression patterns" value="Tissue enhanced (retina, testis)"/>
</dbReference>
<dbReference type="MIM" id="608690">
    <property type="type" value="gene"/>
</dbReference>
<dbReference type="neXtProt" id="NX_Q9Y2D8"/>
<dbReference type="OpenTargets" id="ENSG00000117155"/>
<dbReference type="PharmGKB" id="PA38155"/>
<dbReference type="VEuPathDB" id="HostDB:ENSG00000117155"/>
<dbReference type="eggNOG" id="ENOG502QQJF">
    <property type="taxonomic scope" value="Eukaryota"/>
</dbReference>
<dbReference type="GeneTree" id="ENSGT00390000007688"/>
<dbReference type="HOGENOM" id="CLU_031049_0_0_1"/>
<dbReference type="InParanoid" id="Q9Y2D8"/>
<dbReference type="OMA" id="QHCKEMI"/>
<dbReference type="OrthoDB" id="312015at2759"/>
<dbReference type="PAN-GO" id="Q9Y2D8">
    <property type="GO annotations" value="3 GO annotations based on evolutionary models"/>
</dbReference>
<dbReference type="PhylomeDB" id="Q9Y2D8"/>
<dbReference type="TreeFam" id="TF332889"/>
<dbReference type="PathwayCommons" id="Q9Y2D8"/>
<dbReference type="SignaLink" id="Q9Y2D8"/>
<dbReference type="BioGRID-ORCS" id="117178">
    <property type="hits" value="8 hits in 1158 CRISPR screens"/>
</dbReference>
<dbReference type="ChiTaRS" id="SSX2IP">
    <property type="organism name" value="human"/>
</dbReference>
<dbReference type="GeneWiki" id="SSX2IP"/>
<dbReference type="GenomeRNAi" id="117178"/>
<dbReference type="Pharos" id="Q9Y2D8">
    <property type="development level" value="Tbio"/>
</dbReference>
<dbReference type="PRO" id="PR:Q9Y2D8"/>
<dbReference type="Proteomes" id="UP000005640">
    <property type="component" value="Chromosome 1"/>
</dbReference>
<dbReference type="RNAct" id="Q9Y2D8">
    <property type="molecule type" value="protein"/>
</dbReference>
<dbReference type="Bgee" id="ENSG00000117155">
    <property type="expression patterns" value="Expressed in left testis and 184 other cell types or tissues"/>
</dbReference>
<dbReference type="ExpressionAtlas" id="Q9Y2D8">
    <property type="expression patterns" value="baseline and differential"/>
</dbReference>
<dbReference type="GO" id="GO:0005912">
    <property type="term" value="C:adherens junction"/>
    <property type="evidence" value="ECO:0007669"/>
    <property type="project" value="UniProtKB-SubCell"/>
</dbReference>
<dbReference type="GO" id="GO:0031252">
    <property type="term" value="C:cell leading edge"/>
    <property type="evidence" value="ECO:0007669"/>
    <property type="project" value="Ensembl"/>
</dbReference>
<dbReference type="GO" id="GO:0034451">
    <property type="term" value="C:centriolar satellite"/>
    <property type="evidence" value="ECO:0000314"/>
    <property type="project" value="HPA"/>
</dbReference>
<dbReference type="GO" id="GO:0005813">
    <property type="term" value="C:centrosome"/>
    <property type="evidence" value="ECO:0000314"/>
    <property type="project" value="HPA"/>
</dbReference>
<dbReference type="GO" id="GO:0036064">
    <property type="term" value="C:ciliary basal body"/>
    <property type="evidence" value="ECO:0000314"/>
    <property type="project" value="HPA"/>
</dbReference>
<dbReference type="GO" id="GO:0005737">
    <property type="term" value="C:cytoplasm"/>
    <property type="evidence" value="ECO:0007669"/>
    <property type="project" value="UniProtKB-KW"/>
</dbReference>
<dbReference type="GO" id="GO:0005634">
    <property type="term" value="C:nucleus"/>
    <property type="evidence" value="ECO:0007669"/>
    <property type="project" value="UniProtKB-SubCell"/>
</dbReference>
<dbReference type="GO" id="GO:0032991">
    <property type="term" value="C:protein-containing complex"/>
    <property type="evidence" value="ECO:0000314"/>
    <property type="project" value="LIFEdb"/>
</dbReference>
<dbReference type="GO" id="GO:0019904">
    <property type="term" value="F:protein domain specific binding"/>
    <property type="evidence" value="ECO:0007669"/>
    <property type="project" value="Ensembl"/>
</dbReference>
<dbReference type="GO" id="GO:0007155">
    <property type="term" value="P:cell adhesion"/>
    <property type="evidence" value="ECO:0007669"/>
    <property type="project" value="UniProtKB-KW"/>
</dbReference>
<dbReference type="GO" id="GO:0007098">
    <property type="term" value="P:centrosome cycle"/>
    <property type="evidence" value="ECO:0000315"/>
    <property type="project" value="UniProtKB"/>
</dbReference>
<dbReference type="GO" id="GO:0060271">
    <property type="term" value="P:cilium assembly"/>
    <property type="evidence" value="ECO:0000315"/>
    <property type="project" value="UniProtKB"/>
</dbReference>
<dbReference type="GO" id="GO:0035735">
    <property type="term" value="P:intraciliary transport involved in cilium assembly"/>
    <property type="evidence" value="ECO:0000315"/>
    <property type="project" value="UniProtKB"/>
</dbReference>
<dbReference type="GO" id="GO:2000145">
    <property type="term" value="P:regulation of cell motility"/>
    <property type="evidence" value="ECO:0007669"/>
    <property type="project" value="Ensembl"/>
</dbReference>
<dbReference type="GO" id="GO:0035020">
    <property type="term" value="P:regulation of Rac protein signal transduction"/>
    <property type="evidence" value="ECO:0007669"/>
    <property type="project" value="Ensembl"/>
</dbReference>
<dbReference type="InterPro" id="IPR052300">
    <property type="entry name" value="Adhesion_Centrosome_assoc"/>
</dbReference>
<dbReference type="InterPro" id="IPR021622">
    <property type="entry name" value="Afadin/alpha-actinin-bd"/>
</dbReference>
<dbReference type="PANTHER" id="PTHR46507">
    <property type="entry name" value="AFADIN- AND ALPHA-ACTININ-BINDING PROTEIN"/>
    <property type="match status" value="1"/>
</dbReference>
<dbReference type="PANTHER" id="PTHR46507:SF1">
    <property type="entry name" value="AFADIN- AND ALPHA-ACTININ-BINDING PROTEIN"/>
    <property type="match status" value="1"/>
</dbReference>
<dbReference type="Pfam" id="PF11559">
    <property type="entry name" value="ADIP"/>
    <property type="match status" value="1"/>
</dbReference>
<proteinExistence type="evidence at protein level"/>
<comment type="function">
    <text evidence="2 8 10 17">Belongs to an adhesion system, which plays a role in the organization of homotypic, interneuronal and heterotypic cell-cell adherens junctions (AJs). May connect the nectin-afadin and E-cadherin-catenin system through alpha-actinin and may be involved in organization of the actin cytoskeleton at AJs through afadin and alpha-actinin (By similarity). Involved in cell movement: localizes at the leading edge of moving cells in response to PDGF and is required for the formation of the leading edge and the promotion of cell movement, possibly via activation of Rac signaling (By similarity). Acts as a centrosome maturation factor, probably by maintaining the integrity of the pericentriolar material and proper microtubule nucleation at mitotic spindle poles. The function seems to implicate at least in part WRAP73; the SSX2IP:WRAP73 complex is proposed to act as regulator of spindle anchoring at the mitotic centrosome (PubMed:23816619, PubMed:26545777). Involved in ciliogenesis (PubMed:24356449). It is required for targeted recruitment of the BBSome, CEP290, RAB8, and SSTR3 to the cilia (PubMed:24356449).</text>
</comment>
<comment type="subunit">
    <text evidence="2 5 11">Interacts with afadin and alpha-actinin (By similarity). Interacts with VAV2 (By similarity). Interacts with SSX2 and SSX3. Does not interact with SSX1 and SSX4 (PubMed:12007189). Interacts with PCM1 (By similarity). Interacts with WRAP73 (PubMed:26545777).</text>
</comment>
<comment type="interaction">
    <interactant intactId="EBI-2212028">
        <id>Q9Y2D8</id>
    </interactant>
    <interactant intactId="EBI-351267">
        <id>O94929</id>
        <label>ABLIM3</label>
    </interactant>
    <organismsDiffer>false</organismsDiffer>
    <experiments>3</experiments>
</comment>
<comment type="interaction">
    <interactant intactId="EBI-2212028">
        <id>Q9Y2D8</id>
    </interactant>
    <interactant intactId="EBI-8637627">
        <id>Q8WTP8</id>
        <label>AEN</label>
    </interactant>
    <organismsDiffer>false</organismsDiffer>
    <experiments>3</experiments>
</comment>
<comment type="interaction">
    <interactant intactId="EBI-2212028">
        <id>Q9Y2D8</id>
    </interactant>
    <interactant intactId="EBI-541426">
        <id>Q9BXS5</id>
        <label>AP1M1</label>
    </interactant>
    <organismsDiffer>false</organismsDiffer>
    <experiments>3</experiments>
</comment>
<comment type="interaction">
    <interactant intactId="EBI-2212028">
        <id>Q9Y2D8</id>
    </interactant>
    <interactant intactId="EBI-2866142">
        <id>Q32MH5</id>
        <label>ATOSA</label>
    </interactant>
    <organismsDiffer>false</organismsDiffer>
    <experiments>3</experiments>
</comment>
<comment type="interaction">
    <interactant intactId="EBI-2212028">
        <id>Q9Y2D8</id>
    </interactant>
    <interactant intactId="EBI-745073">
        <id>Q9BXY8</id>
        <label>BEX2</label>
    </interactant>
    <organismsDiffer>false</organismsDiffer>
    <experiments>3</experiments>
</comment>
<comment type="interaction">
    <interactant intactId="EBI-2212028">
        <id>Q9Y2D8</id>
    </interactant>
    <interactant intactId="EBI-358049">
        <id>Q13895</id>
        <label>BYSL</label>
    </interactant>
    <organismsDiffer>false</organismsDiffer>
    <experiments>5</experiments>
</comment>
<comment type="interaction">
    <interactant intactId="EBI-2212028">
        <id>Q9Y2D8</id>
    </interactant>
    <interactant intactId="EBI-740204">
        <id>Q9H0W9</id>
        <label>C11orf54</label>
    </interactant>
    <organismsDiffer>false</organismsDiffer>
    <experiments>3</experiments>
</comment>
<comment type="interaction">
    <interactant intactId="EBI-2212028">
        <id>Q9Y2D8</id>
    </interactant>
    <interactant intactId="EBI-751319">
        <id>Q9H257</id>
        <label>CARD9</label>
    </interactant>
    <organismsDiffer>false</organismsDiffer>
    <experiments>3</experiments>
</comment>
<comment type="interaction">
    <interactant intactId="EBI-2212028">
        <id>Q9Y2D8</id>
    </interactant>
    <interactant intactId="EBI-10238351">
        <id>Q9NVL8</id>
        <label>CCDC198</label>
    </interactant>
    <organismsDiffer>false</organismsDiffer>
    <experiments>3</experiments>
</comment>
<comment type="interaction">
    <interactant intactId="EBI-2212028">
        <id>Q9Y2D8</id>
    </interactant>
    <interactant intactId="EBI-10175300">
        <id>Q8TD31-3</id>
        <label>CCHCR1</label>
    </interactant>
    <organismsDiffer>false</organismsDiffer>
    <experiments>3</experiments>
</comment>
<comment type="interaction">
    <interactant intactId="EBI-2212028">
        <id>Q9Y2D8</id>
    </interactant>
    <interactant intactId="EBI-741406">
        <id>P51946</id>
        <label>CCNH</label>
    </interactant>
    <organismsDiffer>false</organismsDiffer>
    <experiments>4</experiments>
</comment>
<comment type="interaction">
    <interactant intactId="EBI-2212028">
        <id>Q9Y2D8</id>
    </interactant>
    <interactant intactId="EBI-396137">
        <id>Q9UJX2</id>
        <label>CDC23</label>
    </interactant>
    <organismsDiffer>false</organismsDiffer>
    <experiments>3</experiments>
</comment>
<comment type="interaction">
    <interactant intactId="EBI-2212028">
        <id>Q9Y2D8</id>
    </interactant>
    <interactant intactId="EBI-5278764">
        <id>Q96GN5</id>
        <label>CDCA7L</label>
    </interactant>
    <organismsDiffer>false</organismsDiffer>
    <experiments>3</experiments>
</comment>
<comment type="interaction">
    <interactant intactId="EBI-2212028">
        <id>Q9Y2D8</id>
    </interactant>
    <interactant intactId="EBI-747776">
        <id>Q53EZ4</id>
        <label>CEP55</label>
    </interactant>
    <organismsDiffer>false</organismsDiffer>
    <experiments>5</experiments>
</comment>
<comment type="interaction">
    <interactant intactId="EBI-2212028">
        <id>Q9Y2D8</id>
    </interactant>
    <interactant intactId="EBI-743375">
        <id>Q9NX63</id>
        <label>CHCHD3</label>
    </interactant>
    <organismsDiffer>false</organismsDiffer>
    <experiments>3</experiments>
</comment>
<comment type="interaction">
    <interactant intactId="EBI-2212028">
        <id>Q9Y2D8</id>
    </interactant>
    <interactant intactId="EBI-77321">
        <id>Q9UER7</id>
        <label>DAXX</label>
    </interactant>
    <organismsDiffer>false</organismsDiffer>
    <experiments>3</experiments>
</comment>
<comment type="interaction">
    <interactant intactId="EBI-2212028">
        <id>Q9Y2D8</id>
    </interactant>
    <interactant intactId="EBI-719554">
        <id>Q9Y295</id>
        <label>DRG1</label>
    </interactant>
    <organismsDiffer>false</organismsDiffer>
    <experiments>3</experiments>
</comment>
<comment type="interaction">
    <interactant intactId="EBI-2212028">
        <id>Q9Y2D8</id>
    </interactant>
    <interactant intactId="EBI-2339219">
        <id>Q08426</id>
        <label>EHHADH</label>
    </interactant>
    <organismsDiffer>false</organismsDiffer>
    <experiments>3</experiments>
</comment>
<comment type="interaction">
    <interactant intactId="EBI-2212028">
        <id>Q9Y2D8</id>
    </interactant>
    <interactant intactId="EBI-73473">
        <id>Q14240</id>
        <label>EIF4A2</label>
    </interactant>
    <organismsDiffer>false</organismsDiffer>
    <experiments>3</experiments>
</comment>
<comment type="interaction">
    <interactant intactId="EBI-2212028">
        <id>Q9Y2D8</id>
    </interactant>
    <interactant intactId="EBI-10232522">
        <id>Q14240-2</id>
        <label>EIF4A2</label>
    </interactant>
    <organismsDiffer>false</organismsDiffer>
    <experiments>3</experiments>
</comment>
<comment type="interaction">
    <interactant intactId="EBI-2212028">
        <id>Q9Y2D8</id>
    </interactant>
    <interactant intactId="EBI-6393536">
        <id>O75616</id>
        <label>ERAL1</label>
    </interactant>
    <organismsDiffer>false</organismsDiffer>
    <experiments>3</experiments>
</comment>
<comment type="interaction">
    <interactant intactId="EBI-2212028">
        <id>Q9Y2D8</id>
    </interactant>
    <interactant intactId="EBI-741626">
        <id>Q9H5Z6</id>
        <label>FAM124B</label>
    </interactant>
    <organismsDiffer>false</organismsDiffer>
    <experiments>3</experiments>
</comment>
<comment type="interaction">
    <interactant intactId="EBI-2212028">
        <id>Q9Y2D8</id>
    </interactant>
    <interactant intactId="EBI-719941">
        <id>Q3B820</id>
        <label>FAM161A</label>
    </interactant>
    <organismsDiffer>false</organismsDiffer>
    <experiments>3</experiments>
</comment>
<comment type="interaction">
    <interactant intactId="EBI-2212028">
        <id>Q9Y2D8</id>
    </interactant>
    <interactant intactId="EBI-2339898">
        <id>Q9NW38</id>
        <label>FANCL</label>
    </interactant>
    <organismsDiffer>false</organismsDiffer>
    <experiments>3</experiments>
</comment>
<comment type="interaction">
    <interactant intactId="EBI-2212028">
        <id>Q9Y2D8</id>
    </interactant>
    <interactant intactId="EBI-10244131">
        <id>Q8TES7-6</id>
        <label>FBF1</label>
    </interactant>
    <organismsDiffer>false</organismsDiffer>
    <experiments>3</experiments>
</comment>
<comment type="interaction">
    <interactant intactId="EBI-2212028">
        <id>Q9Y2D8</id>
    </interactant>
    <interactant intactId="EBI-744935">
        <id>Q9BVV2</id>
        <label>FNDC11</label>
    </interactant>
    <organismsDiffer>false</organismsDiffer>
    <experiments>3</experiments>
</comment>
<comment type="interaction">
    <interactant intactId="EBI-2212028">
        <id>Q9Y2D8</id>
    </interactant>
    <interactant intactId="EBI-741729">
        <id>Q96NE9</id>
        <label>FRMD6</label>
    </interactant>
    <organismsDiffer>false</organismsDiffer>
    <experiments>3</experiments>
</comment>
<comment type="interaction">
    <interactant intactId="EBI-2212028">
        <id>Q9Y2D8</id>
    </interactant>
    <interactant intactId="EBI-744104">
        <id>P55040</id>
        <label>GEM</label>
    </interactant>
    <organismsDiffer>false</organismsDiffer>
    <experiments>3</experiments>
</comment>
<comment type="interaction">
    <interactant intactId="EBI-2212028">
        <id>Q9Y2D8</id>
    </interactant>
    <interactant intactId="EBI-10181260">
        <id>Q08AF8</id>
        <label>GOLGA8G</label>
    </interactant>
    <organismsDiffer>false</organismsDiffer>
    <experiments>3</experiments>
</comment>
<comment type="interaction">
    <interactant intactId="EBI-2212028">
        <id>Q9Y2D8</id>
    </interactant>
    <interactant intactId="EBI-11953488">
        <id>P56524-2</id>
        <label>HDAC4</label>
    </interactant>
    <organismsDiffer>false</organismsDiffer>
    <experiments>3</experiments>
</comment>
<comment type="interaction">
    <interactant intactId="EBI-2212028">
        <id>Q9Y2D8</id>
    </interactant>
    <interactant intactId="EBI-715611">
        <id>Q9C086</id>
        <label>INO80B</label>
    </interactant>
    <organismsDiffer>false</organismsDiffer>
    <experiments>3</experiments>
</comment>
<comment type="interaction">
    <interactant intactId="EBI-2212028">
        <id>Q9Y2D8</id>
    </interactant>
    <interactant intactId="EBI-399080">
        <id>Q92993</id>
        <label>KAT5</label>
    </interactant>
    <organismsDiffer>false</organismsDiffer>
    <experiments>3</experiments>
</comment>
<comment type="interaction">
    <interactant intactId="EBI-2212028">
        <id>Q9Y2D8</id>
    </interactant>
    <interactant intactId="EBI-14069005">
        <id>Q9BVG8-5</id>
        <label>KIFC3</label>
    </interactant>
    <organismsDiffer>false</organismsDiffer>
    <experiments>3</experiments>
</comment>
<comment type="interaction">
    <interactant intactId="EBI-2212028">
        <id>Q9Y2D8</id>
    </interactant>
    <interactant intactId="EBI-739890">
        <id>Q9P2K6</id>
        <label>KLHL42</label>
    </interactant>
    <organismsDiffer>false</organismsDiffer>
    <experiments>3</experiments>
</comment>
<comment type="interaction">
    <interactant intactId="EBI-2212028">
        <id>Q9Y2D8</id>
    </interactant>
    <interactant intactId="EBI-739566">
        <id>P19012</id>
        <label>KRT15</label>
    </interactant>
    <organismsDiffer>false</organismsDiffer>
    <experiments>3</experiments>
</comment>
<comment type="interaction">
    <interactant intactId="EBI-2212028">
        <id>Q9Y2D8</id>
    </interactant>
    <interactant intactId="EBI-948001">
        <id>Q15323</id>
        <label>KRT31</label>
    </interactant>
    <organismsDiffer>false</organismsDiffer>
    <experiments>3</experiments>
</comment>
<comment type="interaction">
    <interactant intactId="EBI-2212028">
        <id>Q9Y2D8</id>
    </interactant>
    <interactant intactId="EBI-10171697">
        <id>Q6A162</id>
        <label>KRT40</label>
    </interactant>
    <organismsDiffer>false</organismsDiffer>
    <experiments>3</experiments>
</comment>
<comment type="interaction">
    <interactant intactId="EBI-2212028">
        <id>Q9Y2D8</id>
    </interactant>
    <interactant intactId="EBI-10172290">
        <id>P60409</id>
        <label>KRTAP10-7</label>
    </interactant>
    <organismsDiffer>false</organismsDiffer>
    <experiments>3</experiments>
</comment>
<comment type="interaction">
    <interactant intactId="EBI-2212028">
        <id>Q9Y2D8</id>
    </interactant>
    <interactant intactId="EBI-10253976">
        <id>Q6PJG3</id>
        <label>LATS1</label>
    </interactant>
    <organismsDiffer>false</organismsDiffer>
    <experiments>3</experiments>
</comment>
<comment type="interaction">
    <interactant intactId="EBI-2212028">
        <id>Q9Y2D8</id>
    </interactant>
    <interactant intactId="EBI-739696">
        <id>P25791</id>
        <label>LMO2</label>
    </interactant>
    <organismsDiffer>false</organismsDiffer>
    <experiments>3</experiments>
</comment>
<comment type="interaction">
    <interactant intactId="EBI-2212028">
        <id>Q9Y2D8</id>
    </interactant>
    <interactant intactId="EBI-1048159">
        <id>P55081</id>
        <label>MFAP1</label>
    </interactant>
    <organismsDiffer>false</organismsDiffer>
    <experiments>3</experiments>
</comment>
<comment type="interaction">
    <interactant intactId="EBI-2212028">
        <id>Q9Y2D8</id>
    </interactant>
    <interactant intactId="EBI-14086479">
        <id>Q8IVT4</id>
        <label>MGC50722</label>
    </interactant>
    <organismsDiffer>false</organismsDiffer>
    <experiments>3</experiments>
</comment>
<comment type="interaction">
    <interactant intactId="EBI-2212028">
        <id>Q9Y2D8</id>
    </interactant>
    <interactant intactId="EBI-10269566">
        <id>Q8NDC4</id>
        <label>MORN4</label>
    </interactant>
    <organismsDiffer>false</organismsDiffer>
    <experiments>6</experiments>
</comment>
<comment type="interaction">
    <interactant intactId="EBI-2212028">
        <id>Q9Y2D8</id>
    </interactant>
    <interactant intactId="EBI-1757866">
        <id>P00540</id>
        <label>MOS</label>
    </interactant>
    <organismsDiffer>false</organismsDiffer>
    <experiments>3</experiments>
</comment>
<comment type="interaction">
    <interactant intactId="EBI-2212028">
        <id>Q9Y2D8</id>
    </interactant>
    <interactant intactId="EBI-2513715">
        <id>Q96EL3</id>
        <label>MRPL53</label>
    </interactant>
    <organismsDiffer>false</organismsDiffer>
    <experiments>3</experiments>
</comment>
<comment type="interaction">
    <interactant intactId="EBI-2212028">
        <id>Q9Y2D8</id>
    </interactant>
    <interactant intactId="EBI-747693">
        <id>P41227</id>
        <label>NAA10</label>
    </interactant>
    <organismsDiffer>false</organismsDiffer>
    <experiments>3</experiments>
</comment>
<comment type="interaction">
    <interactant intactId="EBI-2212028">
        <id>Q9Y2D8</id>
    </interactant>
    <interactant intactId="EBI-716098">
        <id>Q9UGY1</id>
        <label>NOL12</label>
    </interactant>
    <organismsDiffer>false</organismsDiffer>
    <experiments>3</experiments>
</comment>
<comment type="interaction">
    <interactant intactId="EBI-2212028">
        <id>Q9Y2D8</id>
    </interactant>
    <interactant intactId="EBI-741421">
        <id>Q15154</id>
        <label>PCM1</label>
    </interactant>
    <organismsDiffer>false</organismsDiffer>
    <experiments>10</experiments>
</comment>
<comment type="interaction">
    <interactant intactId="EBI-2212028">
        <id>Q9Y2D8</id>
    </interactant>
    <interactant intactId="EBI-713786">
        <id>Q8IXK0</id>
        <label>PHC2</label>
    </interactant>
    <organismsDiffer>false</organismsDiffer>
    <experiments>3</experiments>
</comment>
<comment type="interaction">
    <interactant intactId="EBI-2212028">
        <id>Q9Y2D8</id>
    </interactant>
    <interactant intactId="EBI-2568609">
        <id>Q9BSJ6</id>
        <label>PIMREG</label>
    </interactant>
    <organismsDiffer>false</organismsDiffer>
    <experiments>3</experiments>
</comment>
<comment type="interaction">
    <interactant intactId="EBI-2212028">
        <id>Q9Y2D8</id>
    </interactant>
    <interactant intactId="EBI-602382">
        <id>Q16512</id>
        <label>PKN1</label>
    </interactant>
    <organismsDiffer>false</organismsDiffer>
    <experiments>3</experiments>
</comment>
<comment type="interaction">
    <interactant intactId="EBI-2212028">
        <id>Q9Y2D8</id>
    </interactant>
    <interactant intactId="EBI-10320765">
        <id>Q9UGP5-2</id>
        <label>POLL</label>
    </interactant>
    <organismsDiffer>false</organismsDiffer>
    <experiments>3</experiments>
</comment>
<comment type="interaction">
    <interactant intactId="EBI-2212028">
        <id>Q9Y2D8</id>
    </interactant>
    <interactant intactId="EBI-1181405">
        <id>Q13131</id>
        <label>PRKAA1</label>
    </interactant>
    <organismsDiffer>false</organismsDiffer>
    <experiments>3</experiments>
</comment>
<comment type="interaction">
    <interactant intactId="EBI-2212028">
        <id>Q9Y2D8</id>
    </interactant>
    <interactant intactId="EBI-744322">
        <id>O43395</id>
        <label>PRPF3</label>
    </interactant>
    <organismsDiffer>false</organismsDiffer>
    <experiments>3</experiments>
</comment>
<comment type="interaction">
    <interactant intactId="EBI-2212028">
        <id>Q9Y2D8</id>
    </interactant>
    <interactant intactId="EBI-1567797">
        <id>Q8WWY3</id>
        <label>PRPF31</label>
    </interactant>
    <organismsDiffer>false</organismsDiffer>
    <experiments>6</experiments>
</comment>
<comment type="interaction">
    <interactant intactId="EBI-2212028">
        <id>Q9Y2D8</id>
    </interactant>
    <interactant intactId="EBI-359352">
        <id>P25786</id>
        <label>PSMA1</label>
    </interactant>
    <organismsDiffer>false</organismsDiffer>
    <experiments>3</experiments>
</comment>
<comment type="interaction">
    <interactant intactId="EBI-2212028">
        <id>Q9Y2D8</id>
    </interactant>
    <interactant intactId="EBI-748391">
        <id>Q9BWG6</id>
        <label>SCNM1</label>
    </interactant>
    <organismsDiffer>false</organismsDiffer>
    <experiments>3</experiments>
</comment>
<comment type="interaction">
    <interactant intactId="EBI-2212028">
        <id>Q9Y2D8</id>
    </interactant>
    <interactant intactId="EBI-10313866">
        <id>Q9NUL5</id>
        <label>SHFL</label>
    </interactant>
    <organismsDiffer>false</organismsDiffer>
    <experiments>3</experiments>
</comment>
<comment type="interaction">
    <interactant intactId="EBI-2212028">
        <id>Q9Y2D8</id>
    </interactant>
    <interactant intactId="EBI-11955083">
        <id>Q9NUL5-4</id>
        <label>SHFL</label>
    </interactant>
    <organismsDiffer>false</organismsDiffer>
    <experiments>3</experiments>
</comment>
<comment type="interaction">
    <interactant intactId="EBI-2212028">
        <id>Q9Y2D8</id>
    </interactant>
    <interactant intactId="EBI-2210673">
        <id>Q16385</id>
        <label>SSX2B</label>
    </interactant>
    <organismsDiffer>false</organismsDiffer>
    <experiments>8</experiments>
</comment>
<comment type="interaction">
    <interactant intactId="EBI-2212028">
        <id>Q9Y2D8</id>
    </interactant>
    <interactant intactId="EBI-10295431">
        <id>Q99909</id>
        <label>SSX3</label>
    </interactant>
    <organismsDiffer>false</organismsDiffer>
    <experiments>3</experiments>
</comment>
<comment type="interaction">
    <interactant intactId="EBI-2212028">
        <id>Q9Y2D8</id>
    </interactant>
    <interactant intactId="EBI-745392">
        <id>Q9BSW7</id>
        <label>SYT17</label>
    </interactant>
    <organismsDiffer>false</organismsDiffer>
    <experiments>3</experiments>
</comment>
<comment type="interaction">
    <interactant intactId="EBI-2212028">
        <id>Q9Y2D8</id>
    </interactant>
    <interactant intactId="EBI-10239991">
        <id>Q32MN6</id>
        <label>TBP</label>
    </interactant>
    <organismsDiffer>false</organismsDiffer>
    <experiments>3</experiments>
</comment>
<comment type="interaction">
    <interactant intactId="EBI-2212028">
        <id>Q9Y2D8</id>
    </interactant>
    <interactant intactId="EBI-10176734">
        <id>D3DUQ6</id>
        <label>TEAD4</label>
    </interactant>
    <organismsDiffer>false</organismsDiffer>
    <experiments>3</experiments>
</comment>
<comment type="interaction">
    <interactant intactId="EBI-2212028">
        <id>Q9Y2D8</id>
    </interactant>
    <interactant intactId="EBI-1105213">
        <id>Q9UBB9</id>
        <label>TFIP11</label>
    </interactant>
    <organismsDiffer>false</organismsDiffer>
    <experiments>4</experiments>
</comment>
<comment type="interaction">
    <interactant intactId="EBI-2212028">
        <id>Q9Y2D8</id>
    </interactant>
    <interactant intactId="EBI-373403">
        <id>O95985</id>
        <label>TOP3B</label>
    </interactant>
    <organismsDiffer>false</organismsDiffer>
    <experiments>4</experiments>
</comment>
<comment type="interaction">
    <interactant intactId="EBI-2212028">
        <id>Q9Y2D8</id>
    </interactant>
    <interactant intactId="EBI-10175039">
        <id>Q13625-3</id>
        <label>TP53BP2</label>
    </interactant>
    <organismsDiffer>false</organismsDiffer>
    <experiments>3</experiments>
</comment>
<comment type="interaction">
    <interactant intactId="EBI-2212028">
        <id>Q9Y2D8</id>
    </interactant>
    <interactant intactId="EBI-741602">
        <id>O94972</id>
        <label>TRIM37</label>
    </interactant>
    <organismsDiffer>false</organismsDiffer>
    <experiments>4</experiments>
</comment>
<comment type="interaction">
    <interactant intactId="EBI-2212028">
        <id>Q9Y2D8</id>
    </interactant>
    <interactant intactId="EBI-5235829">
        <id>Q8IWZ5</id>
        <label>TRIM42</label>
    </interactant>
    <organismsDiffer>false</organismsDiffer>
    <experiments>3</experiments>
</comment>
<comment type="interaction">
    <interactant intactId="EBI-2212028">
        <id>Q9Y2D8</id>
    </interactant>
    <interactant intactId="EBI-2130429">
        <id>Q9BYV2</id>
        <label>TRIM54</label>
    </interactant>
    <organismsDiffer>false</organismsDiffer>
    <experiments>3</experiments>
</comment>
<comment type="interaction">
    <interactant intactId="EBI-2212028">
        <id>Q9Y2D8</id>
    </interactant>
    <interactant intactId="EBI-10241197">
        <id>Q3SY00</id>
        <label>TSGA10IP</label>
    </interactant>
    <organismsDiffer>false</organismsDiffer>
    <experiments>3</experiments>
</comment>
<comment type="interaction">
    <interactant intactId="EBI-2212028">
        <id>Q9Y2D8</id>
    </interactant>
    <interactant intactId="EBI-8994397">
        <id>Q5T7W7</id>
        <label>TSTD2</label>
    </interactant>
    <organismsDiffer>false</organismsDiffer>
    <experiments>3</experiments>
</comment>
<comment type="interaction">
    <interactant intactId="EBI-2212028">
        <id>Q9Y2D8</id>
    </interactant>
    <interactant intactId="EBI-6447954">
        <id>Q5W5X9</id>
        <label>TTC23</label>
    </interactant>
    <organismsDiffer>false</organismsDiffer>
    <experiments>3</experiments>
</comment>
<comment type="interaction">
    <interactant intactId="EBI-2212028">
        <id>Q9Y2D8</id>
    </interactant>
    <interactant intactId="EBI-540834">
        <id>P61964</id>
        <label>WDR5</label>
    </interactant>
    <organismsDiffer>false</organismsDiffer>
    <experiments>3</experiments>
</comment>
<comment type="interaction">
    <interactant intactId="EBI-2212028">
        <id>Q9Y2D8</id>
    </interactant>
    <interactant intactId="EBI-1054904">
        <id>Q9P2S5</id>
        <label>WRAP73</label>
    </interactant>
    <organismsDiffer>false</organismsDiffer>
    <experiments>11</experiments>
</comment>
<comment type="interaction">
    <interactant intactId="EBI-2212028">
        <id>Q9Y2D8</id>
    </interactant>
    <interactant intactId="EBI-517127">
        <id>P98170</id>
        <label>XIAP</label>
    </interactant>
    <organismsDiffer>false</organismsDiffer>
    <experiments>4</experiments>
</comment>
<comment type="interaction">
    <interactant intactId="EBI-2212028">
        <id>Q9Y2D8</id>
    </interactant>
    <interactant intactId="EBI-306940">
        <id>Q04917</id>
        <label>YWHAH</label>
    </interactant>
    <organismsDiffer>false</organismsDiffer>
    <experiments>4</experiments>
</comment>
<comment type="interaction">
    <interactant intactId="EBI-2212028">
        <id>Q9Y2D8</id>
    </interactant>
    <interactant intactId="EBI-744471">
        <id>O43167</id>
        <label>ZBTB24</label>
    </interactant>
    <organismsDiffer>false</organismsDiffer>
    <experiments>3</experiments>
</comment>
<comment type="interaction">
    <interactant intactId="EBI-2212028">
        <id>Q9Y2D8</id>
    </interactant>
    <interactant intactId="EBI-3439227">
        <id>Q8N5A5</id>
        <label>ZGPAT</label>
    </interactant>
    <organismsDiffer>false</organismsDiffer>
    <experiments>4</experiments>
</comment>
<comment type="interaction">
    <interactant intactId="EBI-2212028">
        <id>Q9Y2D8</id>
    </interactant>
    <interactant intactId="EBI-10183064">
        <id>Q8N5A5-2</id>
        <label>ZGPAT</label>
    </interactant>
    <organismsDiffer>false</organismsDiffer>
    <experiments>3</experiments>
</comment>
<comment type="interaction">
    <interactant intactId="EBI-2212028">
        <id>Q9Y2D8</id>
    </interactant>
    <interactant intactId="EBI-2682299">
        <id>Q96NC0</id>
        <label>ZMAT2</label>
    </interactant>
    <organismsDiffer>false</organismsDiffer>
    <experiments>3</experiments>
</comment>
<comment type="interaction">
    <interactant intactId="EBI-2212028">
        <id>Q9Y2D8</id>
    </interactant>
    <interactant intactId="EBI-2555767">
        <id>Q15973</id>
        <label>ZNF124</label>
    </interactant>
    <organismsDiffer>false</organismsDiffer>
    <experiments>3</experiments>
</comment>
<comment type="interaction">
    <interactant intactId="EBI-2212028">
        <id>Q9Y2D8</id>
    </interactant>
    <interactant intactId="EBI-751960">
        <id>O95125</id>
        <label>ZNF202</label>
    </interactant>
    <organismsDiffer>false</organismsDiffer>
    <experiments>3</experiments>
</comment>
<comment type="interaction">
    <interactant intactId="EBI-2212028">
        <id>Q9Y2D8</id>
    </interactant>
    <interactant intactId="EBI-10177272">
        <id>P15622-3</id>
        <label>ZNF250</label>
    </interactant>
    <organismsDiffer>false</organismsDiffer>
    <experiments>6</experiments>
</comment>
<comment type="interaction">
    <interactant intactId="EBI-2212028">
        <id>Q9Y2D8</id>
    </interactant>
    <interactant intactId="EBI-1640965">
        <id>P17036</id>
        <label>ZNF3</label>
    </interactant>
    <organismsDiffer>false</organismsDiffer>
    <experiments>3</experiments>
</comment>
<comment type="interaction">
    <interactant intactId="EBI-2212028">
        <id>Q9Y2D8</id>
    </interactant>
    <interactant intactId="EBI-347633">
        <id>Q9H9D4</id>
        <label>ZNF408</label>
    </interactant>
    <organismsDiffer>false</organismsDiffer>
    <experiments>3</experiments>
</comment>
<comment type="interaction">
    <interactant intactId="EBI-2212028">
        <id>Q9Y2D8</id>
    </interactant>
    <interactant intactId="EBI-740727">
        <id>Q8TAU3</id>
        <label>ZNF417</label>
    </interactant>
    <organismsDiffer>false</organismsDiffer>
    <experiments>3</experiments>
</comment>
<comment type="interaction">
    <interactant intactId="EBI-2212028">
        <id>Q9Y2D8</id>
    </interactant>
    <interactant intactId="EBI-11962468">
        <id>Q7Z4V0</id>
        <label>ZNF438</label>
    </interactant>
    <organismsDiffer>false</organismsDiffer>
    <experiments>3</experiments>
</comment>
<comment type="interaction">
    <interactant intactId="EBI-2212028">
        <id>Q9Y2D8</id>
    </interactant>
    <interactant intactId="EBI-6427977">
        <id>Q96SQ5</id>
        <label>ZNF587</label>
    </interactant>
    <organismsDiffer>false</organismsDiffer>
    <experiments>3</experiments>
</comment>
<comment type="interaction">
    <interactant intactId="EBI-2212028">
        <id>Q9Y2D8</id>
    </interactant>
    <interactant intactId="EBI-11985915">
        <id>Q5T619</id>
        <label>ZNF648</label>
    </interactant>
    <organismsDiffer>false</organismsDiffer>
    <experiments>3</experiments>
</comment>
<comment type="interaction">
    <interactant intactId="EBI-2212028">
        <id>Q9Y2D8</id>
    </interactant>
    <interactant intactId="EBI-16429014">
        <id>A0A0S2Z5X4</id>
        <label>ZNF688</label>
    </interactant>
    <organismsDiffer>false</organismsDiffer>
    <experiments>3</experiments>
</comment>
<comment type="interaction">
    <interactant intactId="EBI-2212028">
        <id>Q9Y2D8</id>
    </interactant>
    <interactant intactId="EBI-10240849">
        <id>Q3KQV3</id>
        <label>ZNF792</label>
    </interactant>
    <organismsDiffer>false</organismsDiffer>
    <experiments>3</experiments>
</comment>
<comment type="interaction">
    <interactant intactId="EBI-2212028">
        <id>Q9Y2D8</id>
    </interactant>
    <interactant intactId="EBI-6657923">
        <id>Q15696</id>
        <label>ZRSR2</label>
    </interactant>
    <organismsDiffer>false</organismsDiffer>
    <experiments>4</experiments>
</comment>
<comment type="interaction">
    <interactant intactId="EBI-2212028">
        <id>Q9Y2D8</id>
    </interactant>
    <interactant intactId="EBI-1210440">
        <id>O43309</id>
        <label>ZSCAN12</label>
    </interactant>
    <organismsDiffer>false</organismsDiffer>
    <experiments>3</experiments>
</comment>
<comment type="interaction">
    <interactant intactId="EBI-2212028">
        <id>Q9Y2D8</id>
    </interactant>
    <interactant intactId="EBI-10174671">
        <id>A8K932</id>
    </interactant>
    <organismsDiffer>false</organismsDiffer>
    <experiments>3</experiments>
</comment>
<comment type="interaction">
    <interactant intactId="EBI-2212028">
        <id>Q9Y2D8</id>
    </interactant>
    <interactant intactId="EBI-25492395">
        <id>PRO_0000449633</id>
        <label>rep</label>
        <dbReference type="UniProtKB" id="P0DTD1"/>
    </interactant>
    <organismsDiffer>true</organismsDiffer>
    <experiments>4</experiments>
</comment>
<comment type="interaction">
    <interactant intactId="EBI-2212028">
        <id>Q9Y2D8</id>
    </interactant>
    <interactant intactId="EBI-9676218">
        <id>P03410</id>
        <label>tax</label>
    </interactant>
    <organismsDiffer>true</organismsDiffer>
    <experiments>3</experiments>
</comment>
<comment type="interaction">
    <interactant intactId="EBI-2212028">
        <id>Q9Y2D8</id>
    </interactant>
    <interactant intactId="EBI-11694665">
        <id>Q9JM98</id>
        <label>Wrap73</label>
    </interactant>
    <organismsDiffer>true</organismsDiffer>
    <experiments>3</experiments>
</comment>
<comment type="subcellular location">
    <subcellularLocation>
        <location evidence="1">Cell junction</location>
        <location evidence="1">Adherens junction</location>
    </subcellularLocation>
    <subcellularLocation>
        <location>Nucleus</location>
    </subcellularLocation>
    <subcellularLocation>
        <location evidence="8 10">Cytoplasm</location>
        <location evidence="8 10">Cytoskeleton</location>
        <location evidence="8 10">Microtubule organizing center</location>
        <location evidence="8 10">Centrosome</location>
        <location evidence="8 10">Centriolar satellite</location>
    </subcellularLocation>
    <subcellularLocation>
        <location evidence="10">Cytoplasm</location>
        <location evidence="10">Cytoskeleton</location>
        <location evidence="10">Cilium basal body</location>
    </subcellularLocation>
    <text evidence="1">Not found at cell-matrix AJs.</text>
</comment>
<comment type="alternative products">
    <event type="alternative splicing"/>
    <isoform>
        <id>Q9Y2D8-1</id>
        <name>1</name>
        <sequence type="displayed"/>
    </isoform>
    <isoform>
        <id>Q9Y2D8-2</id>
        <name>2</name>
        <sequence type="described" ref="VSP_011724 VSP_011725"/>
    </isoform>
    <isoform>
        <id>Q9Y2D8-3</id>
        <name>3</name>
        <sequence type="described" ref="VSP_046368"/>
    </isoform>
</comment>
<comment type="tissue specificity">
    <text>Widely expressed, with the highest expression in brain, intermediate expression in kidney, testis, spinal cord, liver, heart, lung, skeletal muscle, ovary, fetal liver and fetal brain, and little to no expression in pancreas and spleen. All specific brain regions showed intermediate to high expression, with highest expression in amygdala. Also expressed in fetal tissues, mainly in liver and brain.</text>
</comment>
<comment type="developmental stage">
    <text evidence="8 9">Expressed in interphase and M phase cells. Down-regulated by the miRNA miR338-3p.</text>
</comment>
<comment type="domain">
    <text>Both the N-terminal (up to position 79) and the C-terminal (from position 304) sequences are required for interaction with SSX2.</text>
</comment>
<comment type="miscellaneous">
    <text evidence="15 16">Acts as an acute myeloid leukemia-associated antigen and may be used as a potential immunotherapy target for leukemia (PubMed:17686061, PubMed:19179477).</text>
</comment>
<comment type="similarity">
    <text evidence="14">Belongs to the ADIP family.</text>
</comment>
<comment type="sequence caution" evidence="14">
    <conflict type="erroneous initiation">
        <sequence resource="EMBL-CDS" id="BAA76767"/>
    </conflict>
</comment>
<comment type="online information" name="Atlas of Genetics and Cytogenetics in Oncology and Haematology">
    <link uri="https://atlasgeneticsoncology.org/gene/42407/SSX2IP"/>
</comment>
<sequence>MGDWMTVTDPGLSSESKTISQYTSETKMSPSSLYSQQVLCSSIPLSKNVHSFFSAFCTEDNIEQSISYLDQELTTFGFPSLYEESKGKETKRELNIVAVLNCMNELLVLQRKNLLAQENVETQNLKLGSDMDHLQSCYSKLKEQLETSRREMIGLQERDRQLQCKNRNLHQLLKNEKDEVQKLQNIIASRATQYNHDMKRKEREYNKLKERLHQLVMNKKDKKIAMDILNYVGRADGKRGSWRTGKTEARNEDEMYKILLNDYEYRQKQILMENAELKKVLQQMKKEMISLLSPQKKKPRERVDDSTGTVISDVEEDAGELSRESMWDLSCETVREQLTNSIRKQWRILKSHVEKLDNQVSKVHLEGFNDEDVISRQDHEQETEKLELEIQQCKEMIKTQQQLLQQQLATAYDDDTTSLLRDCYLLEEKERLKEEWSLFKEQKKNFERERRSFTEAAIRLGLERKAFEEERASWLKQQFLNMTTFDHQNSENVKLFSAFSGSSDWDNLIVHSRQPQKKPHSVSNGSPVCMSKLTKSLPASPSTSDFCQTRSCISEHSSINVLNITAEEIKPNQVGGECTNQKWSVASRPGSQEGCYSGCSLSYTNSHVEKDDLP</sequence>
<reference key="1">
    <citation type="journal article" date="2002" name="Genes Chromosomes Cancer">
        <title>The cancer-related protein SSX2 interacts with the human homologue of a Ras-like GTPase interactor, RAB3IP, and a novel nuclear protein, SSX2IP.</title>
        <authorList>
            <person name="de Bruijn D.R.H."/>
            <person name="dos Santos N.R."/>
            <person name="Kater-Baats E."/>
            <person name="Thijssen J."/>
            <person name="van den Berk L."/>
            <person name="Stap J."/>
            <person name="Balemans M."/>
            <person name="Schepens M."/>
            <person name="Merkx G."/>
            <person name="van Kessel A.G."/>
        </authorList>
    </citation>
    <scope>NUCLEOTIDE SEQUENCE [MRNA]</scope>
    <scope>INTERACTION WITH SSX2 AND SSX3</scope>
    <scope>SUBCELLULAR LOCATION</scope>
    <source>
        <tissue>Testis</tissue>
    </source>
</reference>
<reference key="2">
    <citation type="submission" date="2003-08" db="EMBL/GenBank/DDBJ databases">
        <title>Cloning a new transcript of X breakpoint 2 interacting protein (SSX2IP) in testis.</title>
        <authorList>
            <person name="Lu L."/>
            <person name="Huang X.Y."/>
            <person name="Xu M."/>
            <person name="Yin L.L."/>
            <person name="Li J.M."/>
            <person name="Zhou Z.M."/>
            <person name="Sha J.H."/>
        </authorList>
    </citation>
    <scope>NUCLEOTIDE SEQUENCE [MRNA] (ISOFORM 1)</scope>
    <source>
        <tissue>Testis</tissue>
    </source>
</reference>
<reference key="3">
    <citation type="journal article" date="1999" name="DNA Res.">
        <title>Prediction of the coding sequences of unidentified human genes. XIII. The complete sequences of 100 new cDNA clones from brain which code for large proteins in vitro.</title>
        <authorList>
            <person name="Nagase T."/>
            <person name="Ishikawa K."/>
            <person name="Suyama M."/>
            <person name="Kikuno R."/>
            <person name="Hirosawa M."/>
            <person name="Miyajima N."/>
            <person name="Tanaka A."/>
            <person name="Kotani H."/>
            <person name="Nomura N."/>
            <person name="Ohara O."/>
        </authorList>
    </citation>
    <scope>NUCLEOTIDE SEQUENCE [LARGE SCALE MRNA] (ISOFORM 1)</scope>
    <source>
        <tissue>Brain</tissue>
    </source>
</reference>
<reference key="4">
    <citation type="journal article" date="2004" name="Nat. Genet.">
        <title>Complete sequencing and characterization of 21,243 full-length human cDNAs.</title>
        <authorList>
            <person name="Ota T."/>
            <person name="Suzuki Y."/>
            <person name="Nishikawa T."/>
            <person name="Otsuki T."/>
            <person name="Sugiyama T."/>
            <person name="Irie R."/>
            <person name="Wakamatsu A."/>
            <person name="Hayashi K."/>
            <person name="Sato H."/>
            <person name="Nagai K."/>
            <person name="Kimura K."/>
            <person name="Makita H."/>
            <person name="Sekine M."/>
            <person name="Obayashi M."/>
            <person name="Nishi T."/>
            <person name="Shibahara T."/>
            <person name="Tanaka T."/>
            <person name="Ishii S."/>
            <person name="Yamamoto J."/>
            <person name="Saito K."/>
            <person name="Kawai Y."/>
            <person name="Isono Y."/>
            <person name="Nakamura Y."/>
            <person name="Nagahari K."/>
            <person name="Murakami K."/>
            <person name="Yasuda T."/>
            <person name="Iwayanagi T."/>
            <person name="Wagatsuma M."/>
            <person name="Shiratori A."/>
            <person name="Sudo H."/>
            <person name="Hosoiri T."/>
            <person name="Kaku Y."/>
            <person name="Kodaira H."/>
            <person name="Kondo H."/>
            <person name="Sugawara M."/>
            <person name="Takahashi M."/>
            <person name="Kanda K."/>
            <person name="Yokoi T."/>
            <person name="Furuya T."/>
            <person name="Kikkawa E."/>
            <person name="Omura Y."/>
            <person name="Abe K."/>
            <person name="Kamihara K."/>
            <person name="Katsuta N."/>
            <person name="Sato K."/>
            <person name="Tanikawa M."/>
            <person name="Yamazaki M."/>
            <person name="Ninomiya K."/>
            <person name="Ishibashi T."/>
            <person name="Yamashita H."/>
            <person name="Murakawa K."/>
            <person name="Fujimori K."/>
            <person name="Tanai H."/>
            <person name="Kimata M."/>
            <person name="Watanabe M."/>
            <person name="Hiraoka S."/>
            <person name="Chiba Y."/>
            <person name="Ishida S."/>
            <person name="Ono Y."/>
            <person name="Takiguchi S."/>
            <person name="Watanabe S."/>
            <person name="Yosida M."/>
            <person name="Hotuta T."/>
            <person name="Kusano J."/>
            <person name="Kanehori K."/>
            <person name="Takahashi-Fujii A."/>
            <person name="Hara H."/>
            <person name="Tanase T.-O."/>
            <person name="Nomura Y."/>
            <person name="Togiya S."/>
            <person name="Komai F."/>
            <person name="Hara R."/>
            <person name="Takeuchi K."/>
            <person name="Arita M."/>
            <person name="Imose N."/>
            <person name="Musashino K."/>
            <person name="Yuuki H."/>
            <person name="Oshima A."/>
            <person name="Sasaki N."/>
            <person name="Aotsuka S."/>
            <person name="Yoshikawa Y."/>
            <person name="Matsunawa H."/>
            <person name="Ichihara T."/>
            <person name="Shiohata N."/>
            <person name="Sano S."/>
            <person name="Moriya S."/>
            <person name="Momiyama H."/>
            <person name="Satoh N."/>
            <person name="Takami S."/>
            <person name="Terashima Y."/>
            <person name="Suzuki O."/>
            <person name="Nakagawa S."/>
            <person name="Senoh A."/>
            <person name="Mizoguchi H."/>
            <person name="Goto Y."/>
            <person name="Shimizu F."/>
            <person name="Wakebe H."/>
            <person name="Hishigaki H."/>
            <person name="Watanabe T."/>
            <person name="Sugiyama A."/>
            <person name="Takemoto M."/>
            <person name="Kawakami B."/>
            <person name="Yamazaki M."/>
            <person name="Watanabe K."/>
            <person name="Kumagai A."/>
            <person name="Itakura S."/>
            <person name="Fukuzumi Y."/>
            <person name="Fujimori Y."/>
            <person name="Komiyama M."/>
            <person name="Tashiro H."/>
            <person name="Tanigami A."/>
            <person name="Fujiwara T."/>
            <person name="Ono T."/>
            <person name="Yamada K."/>
            <person name="Fujii Y."/>
            <person name="Ozaki K."/>
            <person name="Hirao M."/>
            <person name="Ohmori Y."/>
            <person name="Kawabata A."/>
            <person name="Hikiji T."/>
            <person name="Kobatake N."/>
            <person name="Inagaki H."/>
            <person name="Ikema Y."/>
            <person name="Okamoto S."/>
            <person name="Okitani R."/>
            <person name="Kawakami T."/>
            <person name="Noguchi S."/>
            <person name="Itoh T."/>
            <person name="Shigeta K."/>
            <person name="Senba T."/>
            <person name="Matsumura K."/>
            <person name="Nakajima Y."/>
            <person name="Mizuno T."/>
            <person name="Morinaga M."/>
            <person name="Sasaki M."/>
            <person name="Togashi T."/>
            <person name="Oyama M."/>
            <person name="Hata H."/>
            <person name="Watanabe M."/>
            <person name="Komatsu T."/>
            <person name="Mizushima-Sugano J."/>
            <person name="Satoh T."/>
            <person name="Shirai Y."/>
            <person name="Takahashi Y."/>
            <person name="Nakagawa K."/>
            <person name="Okumura K."/>
            <person name="Nagase T."/>
            <person name="Nomura N."/>
            <person name="Kikuchi H."/>
            <person name="Masuho Y."/>
            <person name="Yamashita R."/>
            <person name="Nakai K."/>
            <person name="Yada T."/>
            <person name="Nakamura Y."/>
            <person name="Ohara O."/>
            <person name="Isogai T."/>
            <person name="Sugano S."/>
        </authorList>
    </citation>
    <scope>NUCLEOTIDE SEQUENCE [LARGE SCALE MRNA] (ISOFORMS 1 AND 3)</scope>
    <scope>VARIANT ARG-578</scope>
    <source>
        <tissue>Cerebellum</tissue>
        <tissue>Testis</tissue>
    </source>
</reference>
<reference key="5">
    <citation type="journal article" date="2007" name="BMC Genomics">
        <title>The full-ORF clone resource of the German cDNA consortium.</title>
        <authorList>
            <person name="Bechtel S."/>
            <person name="Rosenfelder H."/>
            <person name="Duda A."/>
            <person name="Schmidt C.P."/>
            <person name="Ernst U."/>
            <person name="Wellenreuther R."/>
            <person name="Mehrle A."/>
            <person name="Schuster C."/>
            <person name="Bahr A."/>
            <person name="Bloecker H."/>
            <person name="Heubner D."/>
            <person name="Hoerlein A."/>
            <person name="Michel G."/>
            <person name="Wedler H."/>
            <person name="Koehrer K."/>
            <person name="Ottenwaelder B."/>
            <person name="Poustka A."/>
            <person name="Wiemann S."/>
            <person name="Schupp I."/>
        </authorList>
    </citation>
    <scope>NUCLEOTIDE SEQUENCE [LARGE SCALE MRNA] (ISOFORM 1)</scope>
    <scope>VARIANT ARG-578</scope>
    <source>
        <tissue>Testis</tissue>
    </source>
</reference>
<reference key="6">
    <citation type="journal article" date="2006" name="Nature">
        <title>The DNA sequence and biological annotation of human chromosome 1.</title>
        <authorList>
            <person name="Gregory S.G."/>
            <person name="Barlow K.F."/>
            <person name="McLay K.E."/>
            <person name="Kaul R."/>
            <person name="Swarbreck D."/>
            <person name="Dunham A."/>
            <person name="Scott C.E."/>
            <person name="Howe K.L."/>
            <person name="Woodfine K."/>
            <person name="Spencer C.C.A."/>
            <person name="Jones M.C."/>
            <person name="Gillson C."/>
            <person name="Searle S."/>
            <person name="Zhou Y."/>
            <person name="Kokocinski F."/>
            <person name="McDonald L."/>
            <person name="Evans R."/>
            <person name="Phillips K."/>
            <person name="Atkinson A."/>
            <person name="Cooper R."/>
            <person name="Jones C."/>
            <person name="Hall R.E."/>
            <person name="Andrews T.D."/>
            <person name="Lloyd C."/>
            <person name="Ainscough R."/>
            <person name="Almeida J.P."/>
            <person name="Ambrose K.D."/>
            <person name="Anderson F."/>
            <person name="Andrew R.W."/>
            <person name="Ashwell R.I.S."/>
            <person name="Aubin K."/>
            <person name="Babbage A.K."/>
            <person name="Bagguley C.L."/>
            <person name="Bailey J."/>
            <person name="Beasley H."/>
            <person name="Bethel G."/>
            <person name="Bird C.P."/>
            <person name="Bray-Allen S."/>
            <person name="Brown J.Y."/>
            <person name="Brown A.J."/>
            <person name="Buckley D."/>
            <person name="Burton J."/>
            <person name="Bye J."/>
            <person name="Carder C."/>
            <person name="Chapman J.C."/>
            <person name="Clark S.Y."/>
            <person name="Clarke G."/>
            <person name="Clee C."/>
            <person name="Cobley V."/>
            <person name="Collier R.E."/>
            <person name="Corby N."/>
            <person name="Coville G.J."/>
            <person name="Davies J."/>
            <person name="Deadman R."/>
            <person name="Dunn M."/>
            <person name="Earthrowl M."/>
            <person name="Ellington A.G."/>
            <person name="Errington H."/>
            <person name="Frankish A."/>
            <person name="Frankland J."/>
            <person name="French L."/>
            <person name="Garner P."/>
            <person name="Garnett J."/>
            <person name="Gay L."/>
            <person name="Ghori M.R.J."/>
            <person name="Gibson R."/>
            <person name="Gilby L.M."/>
            <person name="Gillett W."/>
            <person name="Glithero R.J."/>
            <person name="Grafham D.V."/>
            <person name="Griffiths C."/>
            <person name="Griffiths-Jones S."/>
            <person name="Grocock R."/>
            <person name="Hammond S."/>
            <person name="Harrison E.S.I."/>
            <person name="Hart E."/>
            <person name="Haugen E."/>
            <person name="Heath P.D."/>
            <person name="Holmes S."/>
            <person name="Holt K."/>
            <person name="Howden P.J."/>
            <person name="Hunt A.R."/>
            <person name="Hunt S.E."/>
            <person name="Hunter G."/>
            <person name="Isherwood J."/>
            <person name="James R."/>
            <person name="Johnson C."/>
            <person name="Johnson D."/>
            <person name="Joy A."/>
            <person name="Kay M."/>
            <person name="Kershaw J.K."/>
            <person name="Kibukawa M."/>
            <person name="Kimberley A.M."/>
            <person name="King A."/>
            <person name="Knights A.J."/>
            <person name="Lad H."/>
            <person name="Laird G."/>
            <person name="Lawlor S."/>
            <person name="Leongamornlert D.A."/>
            <person name="Lloyd D.M."/>
            <person name="Loveland J."/>
            <person name="Lovell J."/>
            <person name="Lush M.J."/>
            <person name="Lyne R."/>
            <person name="Martin S."/>
            <person name="Mashreghi-Mohammadi M."/>
            <person name="Matthews L."/>
            <person name="Matthews N.S.W."/>
            <person name="McLaren S."/>
            <person name="Milne S."/>
            <person name="Mistry S."/>
            <person name="Moore M.J.F."/>
            <person name="Nickerson T."/>
            <person name="O'Dell C.N."/>
            <person name="Oliver K."/>
            <person name="Palmeiri A."/>
            <person name="Palmer S.A."/>
            <person name="Parker A."/>
            <person name="Patel D."/>
            <person name="Pearce A.V."/>
            <person name="Peck A.I."/>
            <person name="Pelan S."/>
            <person name="Phelps K."/>
            <person name="Phillimore B.J."/>
            <person name="Plumb R."/>
            <person name="Rajan J."/>
            <person name="Raymond C."/>
            <person name="Rouse G."/>
            <person name="Saenphimmachak C."/>
            <person name="Sehra H.K."/>
            <person name="Sheridan E."/>
            <person name="Shownkeen R."/>
            <person name="Sims S."/>
            <person name="Skuce C.D."/>
            <person name="Smith M."/>
            <person name="Steward C."/>
            <person name="Subramanian S."/>
            <person name="Sycamore N."/>
            <person name="Tracey A."/>
            <person name="Tromans A."/>
            <person name="Van Helmond Z."/>
            <person name="Wall M."/>
            <person name="Wallis J.M."/>
            <person name="White S."/>
            <person name="Whitehead S.L."/>
            <person name="Wilkinson J.E."/>
            <person name="Willey D.L."/>
            <person name="Williams H."/>
            <person name="Wilming L."/>
            <person name="Wray P.W."/>
            <person name="Wu Z."/>
            <person name="Coulson A."/>
            <person name="Vaudin M."/>
            <person name="Sulston J.E."/>
            <person name="Durbin R.M."/>
            <person name="Hubbard T."/>
            <person name="Wooster R."/>
            <person name="Dunham I."/>
            <person name="Carter N.P."/>
            <person name="McVean G."/>
            <person name="Ross M.T."/>
            <person name="Harrow J."/>
            <person name="Olson M.V."/>
            <person name="Beck S."/>
            <person name="Rogers J."/>
            <person name="Bentley D.R."/>
        </authorList>
    </citation>
    <scope>NUCLEOTIDE SEQUENCE [LARGE SCALE GENOMIC DNA]</scope>
</reference>
<reference key="7">
    <citation type="submission" date="2005-09" db="EMBL/GenBank/DDBJ databases">
        <authorList>
            <person name="Mural R.J."/>
            <person name="Istrail S."/>
            <person name="Sutton G.G."/>
            <person name="Florea L."/>
            <person name="Halpern A.L."/>
            <person name="Mobarry C.M."/>
            <person name="Lippert R."/>
            <person name="Walenz B."/>
            <person name="Shatkay H."/>
            <person name="Dew I."/>
            <person name="Miller J.R."/>
            <person name="Flanigan M.J."/>
            <person name="Edwards N.J."/>
            <person name="Bolanos R."/>
            <person name="Fasulo D."/>
            <person name="Halldorsson B.V."/>
            <person name="Hannenhalli S."/>
            <person name="Turner R."/>
            <person name="Yooseph S."/>
            <person name="Lu F."/>
            <person name="Nusskern D.R."/>
            <person name="Shue B.C."/>
            <person name="Zheng X.H."/>
            <person name="Zhong F."/>
            <person name="Delcher A.L."/>
            <person name="Huson D.H."/>
            <person name="Kravitz S.A."/>
            <person name="Mouchard L."/>
            <person name="Reinert K."/>
            <person name="Remington K.A."/>
            <person name="Clark A.G."/>
            <person name="Waterman M.S."/>
            <person name="Eichler E.E."/>
            <person name="Adams M.D."/>
            <person name="Hunkapiller M.W."/>
            <person name="Myers E.W."/>
            <person name="Venter J.C."/>
        </authorList>
    </citation>
    <scope>NUCLEOTIDE SEQUENCE [LARGE SCALE GENOMIC DNA]</scope>
</reference>
<reference key="8">
    <citation type="journal article" date="2004" name="Genome Res.">
        <title>The status, quality, and expansion of the NIH full-length cDNA project: the Mammalian Gene Collection (MGC).</title>
        <authorList>
            <consortium name="The MGC Project Team"/>
        </authorList>
    </citation>
    <scope>NUCLEOTIDE SEQUENCE [LARGE SCALE MRNA] (ISOFORMS 1 AND 2)</scope>
    <source>
        <tissue>Brain</tissue>
        <tissue>Eye</tissue>
    </source>
</reference>
<reference key="9">
    <citation type="journal article" date="2007" name="Br. J. Haematol.">
        <title>The leukaemia-associated antigen, SSX2IP, is expressed during mitosis on the surface of myeloid leukaemia cells.</title>
        <authorList>
            <person name="Denniss F.A."/>
            <person name="Breslin A."/>
            <person name="Ingram W."/>
            <person name="Hardwick N.R."/>
            <person name="Mufti G.J."/>
            <person name="Guinn B.A."/>
        </authorList>
    </citation>
    <scope>MYELOID LEUKEMIA-ASSOCIATED ANTIGEN</scope>
</reference>
<reference key="10">
    <citation type="journal article" date="2008" name="Proc. Natl. Acad. Sci. U.S.A.">
        <title>A quantitative atlas of mitotic phosphorylation.</title>
        <authorList>
            <person name="Dephoure N."/>
            <person name="Zhou C."/>
            <person name="Villen J."/>
            <person name="Beausoleil S.A."/>
            <person name="Bakalarski C.E."/>
            <person name="Elledge S.J."/>
            <person name="Gygi S.P."/>
        </authorList>
    </citation>
    <scope>PHOSPHORYLATION [LARGE SCALE ANALYSIS] AT SER-312 AND SER-536</scope>
    <scope>IDENTIFICATION BY MASS SPECTROMETRY [LARGE SCALE ANALYSIS]</scope>
    <source>
        <tissue>Cervix carcinoma</tissue>
    </source>
</reference>
<reference key="11">
    <citation type="journal article" date="2009" name="Blood">
        <title>Elevated expression of the leukemia-associated antigen SSX2IP predicts survival in acute myeloid leukemia patients who lack detectable cytogenetic rearrangements.</title>
        <authorList>
            <person name="Guinn B."/>
            <person name="Greiner J."/>
            <person name="Schmitt M."/>
            <person name="Mills K.I."/>
        </authorList>
    </citation>
    <scope>MYELOID LEUKEMIA-ASSOCIATED ANTIGEN</scope>
</reference>
<reference key="12">
    <citation type="journal article" date="2009" name="Sci. Signal.">
        <title>Quantitative phosphoproteomic analysis of T cell receptor signaling reveals system-wide modulation of protein-protein interactions.</title>
        <authorList>
            <person name="Mayya V."/>
            <person name="Lundgren D.H."/>
            <person name="Hwang S.-I."/>
            <person name="Rezaul K."/>
            <person name="Wu L."/>
            <person name="Eng J.K."/>
            <person name="Rodionov V."/>
            <person name="Han D.K."/>
        </authorList>
    </citation>
    <scope>PHOSPHORYLATION [LARGE SCALE ANALYSIS] AT SER-312</scope>
    <scope>IDENTIFICATION BY MASS SPECTROMETRY [LARGE SCALE ANALYSIS]</scope>
    <source>
        <tissue>Leukemic T-cell</tissue>
    </source>
</reference>
<reference key="13">
    <citation type="journal article" date="2010" name="Sci. Signal.">
        <title>Quantitative phosphoproteomics reveals widespread full phosphorylation site occupancy during mitosis.</title>
        <authorList>
            <person name="Olsen J.V."/>
            <person name="Vermeulen M."/>
            <person name="Santamaria A."/>
            <person name="Kumar C."/>
            <person name="Miller M.L."/>
            <person name="Jensen L.J."/>
            <person name="Gnad F."/>
            <person name="Cox J."/>
            <person name="Jensen T.S."/>
            <person name="Nigg E.A."/>
            <person name="Brunak S."/>
            <person name="Mann M."/>
        </authorList>
    </citation>
    <scope>PHOSPHORYLATION [LARGE SCALE ANALYSIS] AT SER-290; SER-293 AND SER-312</scope>
    <scope>IDENTIFICATION BY MASS SPECTROMETRY [LARGE SCALE ANALYSIS]</scope>
    <source>
        <tissue>Cervix carcinoma</tissue>
    </source>
</reference>
<reference key="14">
    <citation type="journal article" date="2013" name="J. Cell Biol.">
        <title>The centriolar satellite protein SSX2IP promotes centrosome maturation.</title>
        <authorList>
            <person name="Barenz F."/>
            <person name="Inoue D."/>
            <person name="Yokoyama H."/>
            <person name="Tegha-Dunghu J."/>
            <person name="Freiss S."/>
            <person name="Draeger S."/>
            <person name="Mayilo D."/>
            <person name="Cado I."/>
            <person name="Merker S."/>
            <person name="Klinger M."/>
            <person name="Hoeckendorf B."/>
            <person name="Pilz S."/>
            <person name="Hupfeld K."/>
            <person name="Steinbeisser H."/>
            <person name="Lorenz H."/>
            <person name="Ruppert T."/>
            <person name="Wittbrodt J."/>
            <person name="Gruss O.J."/>
        </authorList>
    </citation>
    <scope>FUNCTION</scope>
    <scope>SUBCELLULAR LOCATION</scope>
    <scope>DEVELOPMENTAL STAGE</scope>
</reference>
<reference key="15">
    <citation type="journal article" date="2013" name="J. Proteome Res.">
        <title>Toward a comprehensive characterization of a human cancer cell phosphoproteome.</title>
        <authorList>
            <person name="Zhou H."/>
            <person name="Di Palma S."/>
            <person name="Preisinger C."/>
            <person name="Peng M."/>
            <person name="Polat A.N."/>
            <person name="Heck A.J."/>
            <person name="Mohammed S."/>
        </authorList>
    </citation>
    <scope>PHOSPHORYLATION [LARGE SCALE ANALYSIS] AT SER-293; SER-312; SER-536; SER-540 AND SER-542</scope>
    <scope>IDENTIFICATION BY MASS SPECTROMETRY [LARGE SCALE ANALYSIS]</scope>
    <source>
        <tissue>Cervix carcinoma</tissue>
        <tissue>Erythroleukemia</tissue>
    </source>
</reference>
<reference key="16">
    <citation type="journal article" date="2013" name="PLoS ONE">
        <title>Epigenetic silencing of miR-338-3p contributes to tumorigenicity in gastric cancer by targeting SSX2IP.</title>
        <authorList>
            <person name="Li P."/>
            <person name="Chen X."/>
            <person name="Su L."/>
            <person name="Li C."/>
            <person name="Zhi Q."/>
            <person name="Yu B."/>
            <person name="Sheng H."/>
            <person name="Wang J."/>
            <person name="Feng R."/>
            <person name="Cai Q."/>
            <person name="Li J."/>
            <person name="Yu Y."/>
            <person name="Yan M."/>
            <person name="Liu B."/>
            <person name="Zhu Z."/>
        </authorList>
    </citation>
    <scope>DEVELOPMENTAL STAGE</scope>
</reference>
<reference key="17">
    <citation type="journal article" date="2014" name="Mol. Biol. Cell">
        <title>The novel centriolar satellite protein SSX2IP targets Cep290 to the ciliary transition zone.</title>
        <authorList>
            <person name="Klinger M."/>
            <person name="Wang W."/>
            <person name="Kuhns S."/>
            <person name="Baerenz F."/>
            <person name="Draeger-Meurer S."/>
            <person name="Pereira G."/>
            <person name="Gruss O.J."/>
        </authorList>
    </citation>
    <scope>FUNCTION</scope>
    <scope>SUBCELLULAR LOCATION</scope>
</reference>
<reference key="18">
    <citation type="journal article" date="2015" name="Biochem. Biophys. Res. Commun.">
        <title>The conserved Wdr8-hMsd1/SSX2IP complex localises to the centrosome and ensures proper spindle length and orientation.</title>
        <authorList>
            <person name="Hori A."/>
            <person name="Morand A."/>
            <person name="Ikebe C."/>
            <person name="Frith D."/>
            <person name="Snijders A.P."/>
            <person name="Toda T."/>
        </authorList>
    </citation>
    <scope>FUNCTION</scope>
    <scope>SUBCELLULAR LOCATION</scope>
    <scope>INTERACTION WITH WRAP73</scope>
</reference>
<name>ADIP_HUMAN</name>
<feature type="chain" id="PRO_0000064455" description="Afadin- and alpha-actinin-binding protein">
    <location>
        <begin position="1"/>
        <end position="614"/>
    </location>
</feature>
<feature type="region of interest" description="Disordered" evidence="4">
    <location>
        <begin position="292"/>
        <end position="317"/>
    </location>
</feature>
<feature type="coiled-coil region" evidence="3">
    <location>
        <begin position="131"/>
        <end position="227"/>
    </location>
</feature>
<feature type="coiled-coil region" evidence="3">
    <location>
        <begin position="266"/>
        <end position="293"/>
    </location>
</feature>
<feature type="coiled-coil region" evidence="3">
    <location>
        <begin position="374"/>
        <end position="460"/>
    </location>
</feature>
<feature type="modified residue" description="Phosphoserine" evidence="20">
    <location>
        <position position="290"/>
    </location>
</feature>
<feature type="modified residue" description="Phosphoserine" evidence="20 21">
    <location>
        <position position="293"/>
    </location>
</feature>
<feature type="modified residue" description="Phosphoserine" evidence="18 19 20 21">
    <location>
        <position position="312"/>
    </location>
</feature>
<feature type="modified residue" description="Phosphoserine" evidence="18 21">
    <location>
        <position position="536"/>
    </location>
</feature>
<feature type="modified residue" description="Phosphoserine" evidence="21">
    <location>
        <position position="540"/>
    </location>
</feature>
<feature type="modified residue" description="Phosphoserine" evidence="21">
    <location>
        <position position="542"/>
    </location>
</feature>
<feature type="splice variant" id="VSP_046368" description="In isoform 3." evidence="12">
    <location>
        <begin position="1"/>
        <end position="27"/>
    </location>
</feature>
<feature type="splice variant" id="VSP_011724" description="In isoform 2." evidence="13">
    <original>SSIN</original>
    <variation>RAKN</variation>
    <location>
        <begin position="557"/>
        <end position="560"/>
    </location>
</feature>
<feature type="splice variant" id="VSP_011725" description="In isoform 2." evidence="13">
    <location>
        <begin position="561"/>
        <end position="614"/>
    </location>
</feature>
<feature type="sequence variant" id="VAR_056726" description="In dbSNP:rs1057746." evidence="6 7">
    <original>C</original>
    <variation>R</variation>
    <location>
        <position position="578"/>
    </location>
</feature>
<feature type="sequence conflict" description="In Ref. 2; AAQ72373." evidence="14" ref="2">
    <original>V</original>
    <variation>A</variation>
    <location>
        <position position="232"/>
    </location>
</feature>
<feature type="sequence conflict" description="In Ref. 8; AAH64389." evidence="14" ref="8">
    <location>
        <position position="405"/>
    </location>
</feature>
<feature type="sequence conflict" description="In Ref. 2; AAQ72373." evidence="14" ref="2">
    <original>G</original>
    <variation>V</variation>
    <location>
        <position position="576"/>
    </location>
</feature>
<evidence type="ECO:0000250" key="1"/>
<evidence type="ECO:0000250" key="2">
    <source>
        <dbReference type="UniProtKB" id="Q8VC66"/>
    </source>
</evidence>
<evidence type="ECO:0000255" key="3"/>
<evidence type="ECO:0000256" key="4">
    <source>
        <dbReference type="SAM" id="MobiDB-lite"/>
    </source>
</evidence>
<evidence type="ECO:0000269" key="5">
    <source>
    </source>
</evidence>
<evidence type="ECO:0000269" key="6">
    <source>
    </source>
</evidence>
<evidence type="ECO:0000269" key="7">
    <source>
    </source>
</evidence>
<evidence type="ECO:0000269" key="8">
    <source>
    </source>
</evidence>
<evidence type="ECO:0000269" key="9">
    <source>
    </source>
</evidence>
<evidence type="ECO:0000269" key="10">
    <source>
    </source>
</evidence>
<evidence type="ECO:0000269" key="11">
    <source>
    </source>
</evidence>
<evidence type="ECO:0000303" key="12">
    <source>
    </source>
</evidence>
<evidence type="ECO:0000303" key="13">
    <source>
    </source>
</evidence>
<evidence type="ECO:0000305" key="14"/>
<evidence type="ECO:0000305" key="15">
    <source>
    </source>
</evidence>
<evidence type="ECO:0000305" key="16">
    <source>
    </source>
</evidence>
<evidence type="ECO:0000305" key="17">
    <source>
    </source>
</evidence>
<evidence type="ECO:0007744" key="18">
    <source>
    </source>
</evidence>
<evidence type="ECO:0007744" key="19">
    <source>
    </source>
</evidence>
<evidence type="ECO:0007744" key="20">
    <source>
    </source>
</evidence>
<evidence type="ECO:0007744" key="21">
    <source>
    </source>
</evidence>
<gene>
    <name type="primary">SSX2IP</name>
    <name type="synonym">KIAA0923</name>
</gene>
<protein>
    <recommendedName>
        <fullName>Afadin- and alpha-actinin-binding protein</fullName>
        <shortName>ADIP</shortName>
    </recommendedName>
    <alternativeName>
        <fullName>Afadin DIL domain-interacting protein</fullName>
    </alternativeName>
    <alternativeName>
        <fullName>SSX2-interacting protein</fullName>
    </alternativeName>
</protein>
<accession>Q9Y2D8</accession>
<accession>A8K8W0</accession>
<accession>B4DFE3</accession>
<accession>D3DT13</accession>
<accession>J3KR02</accession>
<accession>Q6P2P8</accession>
<accession>Q6ULS1</accession>
<accession>Q7L168</accession>
<accession>Q9UIX0</accession>
<organism>
    <name type="scientific">Homo sapiens</name>
    <name type="common">Human</name>
    <dbReference type="NCBI Taxonomy" id="9606"/>
    <lineage>
        <taxon>Eukaryota</taxon>
        <taxon>Metazoa</taxon>
        <taxon>Chordata</taxon>
        <taxon>Craniata</taxon>
        <taxon>Vertebrata</taxon>
        <taxon>Euteleostomi</taxon>
        <taxon>Mammalia</taxon>
        <taxon>Eutheria</taxon>
        <taxon>Euarchontoglires</taxon>
        <taxon>Primates</taxon>
        <taxon>Haplorrhini</taxon>
        <taxon>Catarrhini</taxon>
        <taxon>Hominidae</taxon>
        <taxon>Homo</taxon>
    </lineage>
</organism>
<keyword id="KW-0025">Alternative splicing</keyword>
<keyword id="KW-0130">Cell adhesion</keyword>
<keyword id="KW-0965">Cell junction</keyword>
<keyword id="KW-0966">Cell projection</keyword>
<keyword id="KW-0970">Cilium biogenesis/degradation</keyword>
<keyword id="KW-0175">Coiled coil</keyword>
<keyword id="KW-0963">Cytoplasm</keyword>
<keyword id="KW-0206">Cytoskeleton</keyword>
<keyword id="KW-0539">Nucleus</keyword>
<keyword id="KW-0597">Phosphoprotein</keyword>
<keyword id="KW-1267">Proteomics identification</keyword>
<keyword id="KW-1185">Reference proteome</keyword>